<organism>
    <name type="scientific">Yersinia pseudotuberculosis serotype O:3 (strain YPIII)</name>
    <dbReference type="NCBI Taxonomy" id="502800"/>
    <lineage>
        <taxon>Bacteria</taxon>
        <taxon>Pseudomonadati</taxon>
        <taxon>Pseudomonadota</taxon>
        <taxon>Gammaproteobacteria</taxon>
        <taxon>Enterobacterales</taxon>
        <taxon>Yersiniaceae</taxon>
        <taxon>Yersinia</taxon>
    </lineage>
</organism>
<sequence length="304" mass="33268">MYYGFDMGGTKIELGVFDENLQRIWHKRVPTPCEDYPQLLQILRDLTEEADTYCGVQGSVGIGIPGLPNADDGTVFTANVPSAMGQPLQADLSRLIQREVRIDNDANCFALSEAWDPEFRTYPTVLGLILGTGVGGGLIVNGSIVSGRNHITGEFGHFRLPVDALDILGADIPRVPCGCGHRGCIENYISGRGFEWMYSHFYQHTLPATDIIAHYAAGEPKAVAHVERFMDVLAVCLGNLLTMLDPHLVVVGGGLSNFEKIYQELPKRLPAHLLRVARLPRIEKARYGDSGGVRGAAFLHLAEK</sequence>
<proteinExistence type="inferred from homology"/>
<accession>B1JI57</accession>
<feature type="chain" id="PRO_1000140200" description="N-acetyl-D-glucosamine kinase">
    <location>
        <begin position="1"/>
        <end position="304"/>
    </location>
</feature>
<feature type="binding site" evidence="1">
    <location>
        <begin position="4"/>
        <end position="11"/>
    </location>
    <ligand>
        <name>ATP</name>
        <dbReference type="ChEBI" id="CHEBI:30616"/>
    </ligand>
</feature>
<feature type="binding site" evidence="1">
    <location>
        <begin position="133"/>
        <end position="140"/>
    </location>
    <ligand>
        <name>ATP</name>
        <dbReference type="ChEBI" id="CHEBI:30616"/>
    </ligand>
</feature>
<feature type="binding site" evidence="1">
    <location>
        <position position="157"/>
    </location>
    <ligand>
        <name>Zn(2+)</name>
        <dbReference type="ChEBI" id="CHEBI:29105"/>
    </ligand>
</feature>
<feature type="binding site" evidence="1">
    <location>
        <position position="177"/>
    </location>
    <ligand>
        <name>Zn(2+)</name>
        <dbReference type="ChEBI" id="CHEBI:29105"/>
    </ligand>
</feature>
<feature type="binding site" evidence="1">
    <location>
        <position position="179"/>
    </location>
    <ligand>
        <name>Zn(2+)</name>
        <dbReference type="ChEBI" id="CHEBI:29105"/>
    </ligand>
</feature>
<feature type="binding site" evidence="1">
    <location>
        <position position="184"/>
    </location>
    <ligand>
        <name>Zn(2+)</name>
        <dbReference type="ChEBI" id="CHEBI:29105"/>
    </ligand>
</feature>
<name>NAGK_YERPY</name>
<reference key="1">
    <citation type="submission" date="2008-02" db="EMBL/GenBank/DDBJ databases">
        <title>Complete sequence of Yersinia pseudotuberculosis YPIII.</title>
        <authorList>
            <consortium name="US DOE Joint Genome Institute"/>
            <person name="Copeland A."/>
            <person name="Lucas S."/>
            <person name="Lapidus A."/>
            <person name="Glavina del Rio T."/>
            <person name="Dalin E."/>
            <person name="Tice H."/>
            <person name="Bruce D."/>
            <person name="Goodwin L."/>
            <person name="Pitluck S."/>
            <person name="Munk A.C."/>
            <person name="Brettin T."/>
            <person name="Detter J.C."/>
            <person name="Han C."/>
            <person name="Tapia R."/>
            <person name="Schmutz J."/>
            <person name="Larimer F."/>
            <person name="Land M."/>
            <person name="Hauser L."/>
            <person name="Challacombe J.F."/>
            <person name="Green L."/>
            <person name="Lindler L.E."/>
            <person name="Nikolich M.P."/>
            <person name="Richardson P."/>
        </authorList>
    </citation>
    <scope>NUCLEOTIDE SEQUENCE [LARGE SCALE GENOMIC DNA]</scope>
    <source>
        <strain>YPIII</strain>
    </source>
</reference>
<keyword id="KW-0067">ATP-binding</keyword>
<keyword id="KW-0119">Carbohydrate metabolism</keyword>
<keyword id="KW-0418">Kinase</keyword>
<keyword id="KW-0479">Metal-binding</keyword>
<keyword id="KW-0547">Nucleotide-binding</keyword>
<keyword id="KW-0808">Transferase</keyword>
<keyword id="KW-0862">Zinc</keyword>
<protein>
    <recommendedName>
        <fullName evidence="1">N-acetyl-D-glucosamine kinase</fullName>
        <ecNumber evidence="1">2.7.1.59</ecNumber>
    </recommendedName>
    <alternativeName>
        <fullName evidence="1">GlcNAc kinase</fullName>
    </alternativeName>
</protein>
<comment type="function">
    <text evidence="1">Catalyzes the phosphorylation of N-acetyl-D-glucosamine (GlcNAc) derived from cell-wall degradation, yielding GlcNAc-6-P.</text>
</comment>
<comment type="catalytic activity">
    <reaction evidence="1">
        <text>N-acetyl-D-glucosamine + ATP = N-acetyl-D-glucosamine 6-phosphate + ADP + H(+)</text>
        <dbReference type="Rhea" id="RHEA:17417"/>
        <dbReference type="ChEBI" id="CHEBI:15378"/>
        <dbReference type="ChEBI" id="CHEBI:30616"/>
        <dbReference type="ChEBI" id="CHEBI:57513"/>
        <dbReference type="ChEBI" id="CHEBI:456216"/>
        <dbReference type="ChEBI" id="CHEBI:506227"/>
        <dbReference type="EC" id="2.7.1.59"/>
    </reaction>
</comment>
<comment type="pathway">
    <text evidence="1">Cell wall biogenesis; peptidoglycan recycling.</text>
</comment>
<comment type="similarity">
    <text evidence="1">Belongs to the ROK (NagC/XylR) family. NagK subfamily.</text>
</comment>
<gene>
    <name evidence="1" type="primary">nagK</name>
    <name type="ordered locus">YPK_1710</name>
</gene>
<evidence type="ECO:0000255" key="1">
    <source>
        <dbReference type="HAMAP-Rule" id="MF_01271"/>
    </source>
</evidence>
<dbReference type="EC" id="2.7.1.59" evidence="1"/>
<dbReference type="EMBL" id="CP000950">
    <property type="protein sequence ID" value="ACA68003.1"/>
    <property type="molecule type" value="Genomic_DNA"/>
</dbReference>
<dbReference type="RefSeq" id="WP_012303979.1">
    <property type="nucleotide sequence ID" value="NZ_CP009792.1"/>
</dbReference>
<dbReference type="SMR" id="B1JI57"/>
<dbReference type="KEGG" id="ypy:YPK_1710"/>
<dbReference type="PATRIC" id="fig|502800.11.peg.2375"/>
<dbReference type="UniPathway" id="UPA00544"/>
<dbReference type="GO" id="GO:0005524">
    <property type="term" value="F:ATP binding"/>
    <property type="evidence" value="ECO:0007669"/>
    <property type="project" value="UniProtKB-UniRule"/>
</dbReference>
<dbReference type="GO" id="GO:0045127">
    <property type="term" value="F:N-acetylglucosamine kinase activity"/>
    <property type="evidence" value="ECO:0007669"/>
    <property type="project" value="UniProtKB-UniRule"/>
</dbReference>
<dbReference type="GO" id="GO:0008270">
    <property type="term" value="F:zinc ion binding"/>
    <property type="evidence" value="ECO:0007669"/>
    <property type="project" value="UniProtKB-UniRule"/>
</dbReference>
<dbReference type="GO" id="GO:0006044">
    <property type="term" value="P:N-acetylglucosamine metabolic process"/>
    <property type="evidence" value="ECO:0007669"/>
    <property type="project" value="UniProtKB-UniRule"/>
</dbReference>
<dbReference type="GO" id="GO:0009254">
    <property type="term" value="P:peptidoglycan turnover"/>
    <property type="evidence" value="ECO:0007669"/>
    <property type="project" value="UniProtKB-UniRule"/>
</dbReference>
<dbReference type="CDD" id="cd24057">
    <property type="entry name" value="ASKHA_NBD_ROK_NAGK"/>
    <property type="match status" value="1"/>
</dbReference>
<dbReference type="FunFam" id="3.30.420.40:FF:000049">
    <property type="entry name" value="N-acetyl-D-glucosamine kinase"/>
    <property type="match status" value="1"/>
</dbReference>
<dbReference type="FunFam" id="3.30.420.40:FF:000051">
    <property type="entry name" value="N-acetyl-D-glucosamine kinase"/>
    <property type="match status" value="1"/>
</dbReference>
<dbReference type="Gene3D" id="3.30.420.40">
    <property type="match status" value="2"/>
</dbReference>
<dbReference type="HAMAP" id="MF_01271">
    <property type="entry name" value="GlcNAc_kinase"/>
    <property type="match status" value="1"/>
</dbReference>
<dbReference type="InterPro" id="IPR043129">
    <property type="entry name" value="ATPase_NBD"/>
</dbReference>
<dbReference type="InterPro" id="IPR023505">
    <property type="entry name" value="N-acetyl-D-glucosamine_kinase"/>
</dbReference>
<dbReference type="InterPro" id="IPR000600">
    <property type="entry name" value="ROK"/>
</dbReference>
<dbReference type="InterPro" id="IPR049874">
    <property type="entry name" value="ROK_cs"/>
</dbReference>
<dbReference type="NCBIfam" id="NF009835">
    <property type="entry name" value="PRK13310.1"/>
    <property type="match status" value="1"/>
</dbReference>
<dbReference type="NCBIfam" id="NF009836">
    <property type="entry name" value="PRK13311.1"/>
    <property type="match status" value="1"/>
</dbReference>
<dbReference type="PANTHER" id="PTHR18964:SF162">
    <property type="entry name" value="N-ACETYL-D-GLUCOSAMINE KINASE"/>
    <property type="match status" value="1"/>
</dbReference>
<dbReference type="PANTHER" id="PTHR18964">
    <property type="entry name" value="ROK (REPRESSOR, ORF, KINASE) FAMILY"/>
    <property type="match status" value="1"/>
</dbReference>
<dbReference type="Pfam" id="PF00480">
    <property type="entry name" value="ROK"/>
    <property type="match status" value="1"/>
</dbReference>
<dbReference type="SUPFAM" id="SSF53067">
    <property type="entry name" value="Actin-like ATPase domain"/>
    <property type="match status" value="1"/>
</dbReference>
<dbReference type="PROSITE" id="PS01125">
    <property type="entry name" value="ROK"/>
    <property type="match status" value="1"/>
</dbReference>